<feature type="chain" id="PRO_0000182615" description="Flagellar filament 35 kDa core protein">
    <location>
        <begin position="1"/>
        <end position="283"/>
    </location>
</feature>
<gene>
    <name type="primary">flaB</name>
    <name type="ordered locus">LIC_11889</name>
</gene>
<dbReference type="EMBL" id="AE016823">
    <property type="protein sequence ID" value="AAS70475.1"/>
    <property type="molecule type" value="Genomic_DNA"/>
</dbReference>
<dbReference type="RefSeq" id="WP_000586170.1">
    <property type="nucleotide sequence ID" value="NC_005823.1"/>
</dbReference>
<dbReference type="SMR" id="Q72R59"/>
<dbReference type="KEGG" id="lic:LIC_11889"/>
<dbReference type="HOGENOM" id="CLU_011142_2_0_12"/>
<dbReference type="Proteomes" id="UP000007037">
    <property type="component" value="Chromosome I"/>
</dbReference>
<dbReference type="GO" id="GO:0055040">
    <property type="term" value="C:periplasmic flagellum"/>
    <property type="evidence" value="ECO:0007669"/>
    <property type="project" value="UniProtKB-SubCell"/>
</dbReference>
<dbReference type="GO" id="GO:0005198">
    <property type="term" value="F:structural molecule activity"/>
    <property type="evidence" value="ECO:0007669"/>
    <property type="project" value="InterPro"/>
</dbReference>
<dbReference type="Gene3D" id="1.20.1330.10">
    <property type="entry name" value="f41 fragment of flagellin, N-terminal domain"/>
    <property type="match status" value="1"/>
</dbReference>
<dbReference type="Gene3D" id="6.10.10.10">
    <property type="entry name" value="Flagellar export chaperone, C-terminal domain"/>
    <property type="match status" value="1"/>
</dbReference>
<dbReference type="InterPro" id="IPR001492">
    <property type="entry name" value="Flagellin"/>
</dbReference>
<dbReference type="InterPro" id="IPR046358">
    <property type="entry name" value="Flagellin_C"/>
</dbReference>
<dbReference type="InterPro" id="IPR042187">
    <property type="entry name" value="Flagellin_C_sub2"/>
</dbReference>
<dbReference type="InterPro" id="IPR001029">
    <property type="entry name" value="Flagellin_N"/>
</dbReference>
<dbReference type="PANTHER" id="PTHR42792">
    <property type="entry name" value="FLAGELLIN"/>
    <property type="match status" value="1"/>
</dbReference>
<dbReference type="PANTHER" id="PTHR42792:SF2">
    <property type="entry name" value="FLAGELLIN"/>
    <property type="match status" value="1"/>
</dbReference>
<dbReference type="Pfam" id="PF00700">
    <property type="entry name" value="Flagellin_C"/>
    <property type="match status" value="1"/>
</dbReference>
<dbReference type="Pfam" id="PF00669">
    <property type="entry name" value="Flagellin_N"/>
    <property type="match status" value="1"/>
</dbReference>
<dbReference type="PRINTS" id="PR00207">
    <property type="entry name" value="FLAGELLIN"/>
</dbReference>
<dbReference type="SUPFAM" id="SSF64518">
    <property type="entry name" value="Phase 1 flagellin"/>
    <property type="match status" value="1"/>
</dbReference>
<protein>
    <recommendedName>
        <fullName>Flagellar filament 35 kDa core protein</fullName>
    </recommendedName>
    <alternativeName>
        <fullName>Flagellin class B</fullName>
    </alternativeName>
</protein>
<keyword id="KW-0975">Bacterial flagellum</keyword>
<keyword id="KW-0574">Periplasm</keyword>
<reference key="1">
    <citation type="journal article" date="2004" name="J. Bacteriol.">
        <title>Comparative genomics of two Leptospira interrogans serovars reveals novel insights into physiology and pathogenesis.</title>
        <authorList>
            <person name="Nascimento A.L.T.O."/>
            <person name="Ko A.I."/>
            <person name="Martins E.A.L."/>
            <person name="Monteiro-Vitorello C.B."/>
            <person name="Ho P.L."/>
            <person name="Haake D.A."/>
            <person name="Verjovski-Almeida S."/>
            <person name="Hartskeerl R.A."/>
            <person name="Marques M.V."/>
            <person name="Oliveira M.C."/>
            <person name="Menck C.F.M."/>
            <person name="Leite L.C.C."/>
            <person name="Carrer H."/>
            <person name="Coutinho L.L."/>
            <person name="Degrave W.M."/>
            <person name="Dellagostin O.A."/>
            <person name="El-Dorry H."/>
            <person name="Ferro E.S."/>
            <person name="Ferro M.I.T."/>
            <person name="Furlan L.R."/>
            <person name="Gamberini M."/>
            <person name="Giglioti E.A."/>
            <person name="Goes-Neto A."/>
            <person name="Goldman G.H."/>
            <person name="Goldman M.H.S."/>
            <person name="Harakava R."/>
            <person name="Jeronimo S.M.B."/>
            <person name="Junqueira-de-Azevedo I.L.M."/>
            <person name="Kimura E.T."/>
            <person name="Kuramae E.E."/>
            <person name="Lemos E.G.M."/>
            <person name="Lemos M.V.F."/>
            <person name="Marino C.L."/>
            <person name="Nunes L.R."/>
            <person name="de Oliveira R.C."/>
            <person name="Pereira G.G."/>
            <person name="Reis M.S."/>
            <person name="Schriefer A."/>
            <person name="Siqueira W.J."/>
            <person name="Sommer P."/>
            <person name="Tsai S.M."/>
            <person name="Simpson A.J.G."/>
            <person name="Ferro J.A."/>
            <person name="Camargo L.E.A."/>
            <person name="Kitajima J.P."/>
            <person name="Setubal J.C."/>
            <person name="Van Sluys M.A."/>
        </authorList>
    </citation>
    <scope>NUCLEOTIDE SEQUENCE [LARGE SCALE GENOMIC DNA]</scope>
    <source>
        <strain>Fiocruz L1-130</strain>
    </source>
</reference>
<evidence type="ECO:0000305" key="1"/>
<name>FLAB_LEPIC</name>
<comment type="function">
    <text evidence="1">Component of the core of the flagella.</text>
</comment>
<comment type="subunit">
    <text>The flagellum consists of two outer layers around a core that contains several antigenically related polypeptides.</text>
</comment>
<comment type="subcellular location">
    <subcellularLocation>
        <location>Periplasmic flagellum</location>
    </subcellularLocation>
    <subcellularLocation>
        <location>Periplasm</location>
    </subcellularLocation>
</comment>
<comment type="similarity">
    <text evidence="1">Belongs to the bacterial flagellin family.</text>
</comment>
<organism>
    <name type="scientific">Leptospira interrogans serogroup Icterohaemorrhagiae serovar copenhageni (strain Fiocruz L1-130)</name>
    <dbReference type="NCBI Taxonomy" id="267671"/>
    <lineage>
        <taxon>Bacteria</taxon>
        <taxon>Pseudomonadati</taxon>
        <taxon>Spirochaetota</taxon>
        <taxon>Spirochaetia</taxon>
        <taxon>Leptospirales</taxon>
        <taxon>Leptospiraceae</taxon>
        <taxon>Leptospira</taxon>
    </lineage>
</organism>
<sequence>MIINHNLSAVNAHRSLKFNELAVDKTMKALSSGMRINSAADDASGLAVSEKLRTQVNGLRQAERNTEDGMSFIQTAEGFLEQTSNIIQRIRVLAIQTSNGIYSNEDRQLVQVEVSALVDEVDRIASQAEFNKFKLFEGQFARGSRVASMWFHMGPNQNQRERFYIGTMTSKALKLVKADGRPIAISSPGEANDVIGLADAALTKIMKQRADMGAYYNRLEYTAKGLMGAYENMQASESRIRDADMAEEVVSLTTKQILVQSGTAMLAQANMKPNSVLKLLQQI</sequence>
<proteinExistence type="inferred from homology"/>
<accession>Q72R59</accession>